<reference key="1">
    <citation type="journal article" date="2004" name="Nature">
        <title>Genome evolution in yeasts.</title>
        <authorList>
            <person name="Dujon B."/>
            <person name="Sherman D."/>
            <person name="Fischer G."/>
            <person name="Durrens P."/>
            <person name="Casaregola S."/>
            <person name="Lafontaine I."/>
            <person name="de Montigny J."/>
            <person name="Marck C."/>
            <person name="Neuveglise C."/>
            <person name="Talla E."/>
            <person name="Goffard N."/>
            <person name="Frangeul L."/>
            <person name="Aigle M."/>
            <person name="Anthouard V."/>
            <person name="Babour A."/>
            <person name="Barbe V."/>
            <person name="Barnay S."/>
            <person name="Blanchin S."/>
            <person name="Beckerich J.-M."/>
            <person name="Beyne E."/>
            <person name="Bleykasten C."/>
            <person name="Boisrame A."/>
            <person name="Boyer J."/>
            <person name="Cattolico L."/>
            <person name="Confanioleri F."/>
            <person name="de Daruvar A."/>
            <person name="Despons L."/>
            <person name="Fabre E."/>
            <person name="Fairhead C."/>
            <person name="Ferry-Dumazet H."/>
            <person name="Groppi A."/>
            <person name="Hantraye F."/>
            <person name="Hennequin C."/>
            <person name="Jauniaux N."/>
            <person name="Joyet P."/>
            <person name="Kachouri R."/>
            <person name="Kerrest A."/>
            <person name="Koszul R."/>
            <person name="Lemaire M."/>
            <person name="Lesur I."/>
            <person name="Ma L."/>
            <person name="Muller H."/>
            <person name="Nicaud J.-M."/>
            <person name="Nikolski M."/>
            <person name="Oztas S."/>
            <person name="Ozier-Kalogeropoulos O."/>
            <person name="Pellenz S."/>
            <person name="Potier S."/>
            <person name="Richard G.-F."/>
            <person name="Straub M.-L."/>
            <person name="Suleau A."/>
            <person name="Swennen D."/>
            <person name="Tekaia F."/>
            <person name="Wesolowski-Louvel M."/>
            <person name="Westhof E."/>
            <person name="Wirth B."/>
            <person name="Zeniou-Meyer M."/>
            <person name="Zivanovic Y."/>
            <person name="Bolotin-Fukuhara M."/>
            <person name="Thierry A."/>
            <person name="Bouchier C."/>
            <person name="Caudron B."/>
            <person name="Scarpelli C."/>
            <person name="Gaillardin C."/>
            <person name="Weissenbach J."/>
            <person name="Wincker P."/>
            <person name="Souciet J.-L."/>
        </authorList>
    </citation>
    <scope>NUCLEOTIDE SEQUENCE [LARGE SCALE GENOMIC DNA]</scope>
    <source>
        <strain>ATCC 36239 / CBS 767 / BCRC 21394 / JCM 1990 / NBRC 0083 / IGC 2968</strain>
    </source>
</reference>
<protein>
    <recommendedName>
        <fullName evidence="1">Cytoplasmic tRNA 2-thiolation protein 2</fullName>
    </recommendedName>
</protein>
<keyword id="KW-0963">Cytoplasm</keyword>
<keyword id="KW-1185">Reference proteome</keyword>
<keyword id="KW-0819">tRNA processing</keyword>
<gene>
    <name evidence="1" type="primary">NCS2</name>
    <name evidence="1" type="synonym">CTU2</name>
    <name type="ordered locus">DEHA2F20504g</name>
</gene>
<name>CTU2_DEBHA</name>
<organism>
    <name type="scientific">Debaryomyces hansenii (strain ATCC 36239 / CBS 767 / BCRC 21394 / JCM 1990 / NBRC 0083 / IGC 2968)</name>
    <name type="common">Yeast</name>
    <name type="synonym">Torulaspora hansenii</name>
    <dbReference type="NCBI Taxonomy" id="284592"/>
    <lineage>
        <taxon>Eukaryota</taxon>
        <taxon>Fungi</taxon>
        <taxon>Dikarya</taxon>
        <taxon>Ascomycota</taxon>
        <taxon>Saccharomycotina</taxon>
        <taxon>Pichiomycetes</taxon>
        <taxon>Debaryomycetaceae</taxon>
        <taxon>Debaryomyces</taxon>
    </lineage>
</organism>
<evidence type="ECO:0000255" key="1">
    <source>
        <dbReference type="HAMAP-Rule" id="MF_03054"/>
    </source>
</evidence>
<dbReference type="EMBL" id="CR382138">
    <property type="protein sequence ID" value="CAG89627.2"/>
    <property type="molecule type" value="Genomic_DNA"/>
</dbReference>
<dbReference type="RefSeq" id="XP_461239.2">
    <property type="nucleotide sequence ID" value="XM_461239.1"/>
</dbReference>
<dbReference type="FunCoup" id="Q6BKN2">
    <property type="interactions" value="195"/>
</dbReference>
<dbReference type="STRING" id="284592.Q6BKN2"/>
<dbReference type="GeneID" id="2903283"/>
<dbReference type="KEGG" id="dha:DEHA2F20504g"/>
<dbReference type="VEuPathDB" id="FungiDB:DEHA2F20504g"/>
<dbReference type="eggNOG" id="KOG2594">
    <property type="taxonomic scope" value="Eukaryota"/>
</dbReference>
<dbReference type="HOGENOM" id="CLU_024534_1_0_1"/>
<dbReference type="InParanoid" id="Q6BKN2"/>
<dbReference type="OMA" id="KQRKQMM"/>
<dbReference type="OrthoDB" id="25129at2759"/>
<dbReference type="UniPathway" id="UPA00988"/>
<dbReference type="Proteomes" id="UP000000599">
    <property type="component" value="Chromosome F"/>
</dbReference>
<dbReference type="GO" id="GO:0005829">
    <property type="term" value="C:cytosol"/>
    <property type="evidence" value="ECO:0000250"/>
    <property type="project" value="UniProtKB"/>
</dbReference>
<dbReference type="GO" id="GO:0016779">
    <property type="term" value="F:nucleotidyltransferase activity"/>
    <property type="evidence" value="ECO:0007669"/>
    <property type="project" value="UniProtKB-UniRule"/>
</dbReference>
<dbReference type="GO" id="GO:0016783">
    <property type="term" value="F:sulfurtransferase activity"/>
    <property type="evidence" value="ECO:0007669"/>
    <property type="project" value="TreeGrafter"/>
</dbReference>
<dbReference type="GO" id="GO:0000049">
    <property type="term" value="F:tRNA binding"/>
    <property type="evidence" value="ECO:0007669"/>
    <property type="project" value="InterPro"/>
</dbReference>
<dbReference type="GO" id="GO:0001403">
    <property type="term" value="P:invasive growth in response to glucose limitation"/>
    <property type="evidence" value="ECO:0007669"/>
    <property type="project" value="EnsemblFungi"/>
</dbReference>
<dbReference type="GO" id="GO:0032447">
    <property type="term" value="P:protein urmylation"/>
    <property type="evidence" value="ECO:0007669"/>
    <property type="project" value="UniProtKB-UniRule"/>
</dbReference>
<dbReference type="GO" id="GO:0007124">
    <property type="term" value="P:pseudohyphal growth"/>
    <property type="evidence" value="ECO:0007669"/>
    <property type="project" value="EnsemblFungi"/>
</dbReference>
<dbReference type="GO" id="GO:0034227">
    <property type="term" value="P:tRNA thio-modification"/>
    <property type="evidence" value="ECO:0000250"/>
    <property type="project" value="UniProtKB"/>
</dbReference>
<dbReference type="GO" id="GO:0002143">
    <property type="term" value="P:tRNA wobble position uridine thiolation"/>
    <property type="evidence" value="ECO:0007669"/>
    <property type="project" value="EnsemblFungi"/>
</dbReference>
<dbReference type="GO" id="GO:0002098">
    <property type="term" value="P:tRNA wobble uridine modification"/>
    <property type="evidence" value="ECO:0000250"/>
    <property type="project" value="UniProtKB"/>
</dbReference>
<dbReference type="FunFam" id="3.40.50.620:FF:000366">
    <property type="entry name" value="Cytoplasmic tRNA 2-thiolation protein 2"/>
    <property type="match status" value="1"/>
</dbReference>
<dbReference type="Gene3D" id="3.40.50.620">
    <property type="entry name" value="HUPs"/>
    <property type="match status" value="1"/>
</dbReference>
<dbReference type="HAMAP" id="MF_03054">
    <property type="entry name" value="CTU2"/>
    <property type="match status" value="1"/>
</dbReference>
<dbReference type="InterPro" id="IPR019407">
    <property type="entry name" value="CTU2"/>
</dbReference>
<dbReference type="InterPro" id="IPR014729">
    <property type="entry name" value="Rossmann-like_a/b/a_fold"/>
</dbReference>
<dbReference type="PANTHER" id="PTHR20882">
    <property type="entry name" value="CYTOPLASMIC TRNA 2-THIOLATION PROTEIN 2"/>
    <property type="match status" value="1"/>
</dbReference>
<dbReference type="PANTHER" id="PTHR20882:SF14">
    <property type="entry name" value="CYTOPLASMIC TRNA 2-THIOLATION PROTEIN 2"/>
    <property type="match status" value="1"/>
</dbReference>
<dbReference type="Pfam" id="PF10288">
    <property type="entry name" value="CTU2"/>
    <property type="match status" value="1"/>
</dbReference>
<dbReference type="SUPFAM" id="SSF52402">
    <property type="entry name" value="Adenine nucleotide alpha hydrolases-like"/>
    <property type="match status" value="1"/>
</dbReference>
<proteinExistence type="inferred from homology"/>
<comment type="function">
    <text evidence="1">Plays a central role in 2-thiolation of mcm(5)S(2)U at tRNA wobble positions of tRNA(Lys), tRNA(Glu) and tRNA(Gln). May act by forming a heterodimer with NCS6 that ligates sulfur from thiocarboxylated URM1 onto the uridine of tRNAs at wobble position. Prior mcm(5) tRNA modification by the elongator complex is required for 2-thiolation. May also be involved in protein urmylation.</text>
</comment>
<comment type="pathway">
    <text evidence="1">tRNA modification; 5-methoxycarbonylmethyl-2-thiouridine-tRNA biosynthesis.</text>
</comment>
<comment type="subcellular location">
    <subcellularLocation>
        <location evidence="1">Cytoplasm</location>
    </subcellularLocation>
</comment>
<comment type="similarity">
    <text evidence="1">Belongs to the CTU2/NCS2 family.</text>
</comment>
<sequence length="448" mass="51115">MSQPIQYLDVSENIPCSRCKTETAILISRKEKFCKDCFVRFIRGKQRKQMQDEKYKVKYGKNEENSPVQKVLLTLSCGVSSLVLVDVMTSLLKEQFDMHKGKQGFELVLLNINEYELKALDRSVKDVLEQLVQRFKPINITYKILSLESYVLDQSLLEKIVLNGDFTAYSQSIHHDRDYTLSEVLDLCPNKSSLEDLLTIIYDELILRTACLESCETILYGHSMTRIANEIIALTVKGRGSSIYQTVSDHSVNFRNKDYKIIFPLRDVLFAEILAYSKLSELDTFAVESTKPVSKITKNMTIRDLTTNYFNQLDATGYASTASTVVKTGDKLGAPKFEEDSSICQVCGTEIHQDPKEWLRRITVNKAAPLETEEEKEYAEQYKKASSLIEEPSSTQSKTPINICYGCTVTISGIKNESGFIWPIKYPANDEEREILNEYILTDDEDDQ</sequence>
<feature type="chain" id="PRO_0000369295" description="Cytoplasmic tRNA 2-thiolation protein 2">
    <location>
        <begin position="1"/>
        <end position="448"/>
    </location>
</feature>
<accession>Q6BKN2</accession>